<evidence type="ECO:0000255" key="1">
    <source>
        <dbReference type="HAMAP-Rule" id="MF_00439"/>
    </source>
</evidence>
<sequence length="168" mass="19536">MPRSRINGNFIDKTFTIVADILLRVIPTTSGEKEAFTYYRDGMSAQSEGNYAEALQNYYEAMRLEIDPYDRSYILYNIGLIHTSNGEHTKALEYYFRALERNPFLPQAFNNMAVICHYRGEQAIQQGDSEMAEAWFAQAAEYWKQAITLTPGNYIEAQNWLTITRRFE</sequence>
<gene>
    <name evidence="1" type="primary">ycf3</name>
</gene>
<feature type="chain" id="PRO_0000217823" description="Photosystem I assembly protein Ycf3">
    <location>
        <begin position="1"/>
        <end position="168"/>
    </location>
</feature>
<feature type="repeat" description="TPR 1">
    <location>
        <begin position="35"/>
        <end position="68"/>
    </location>
</feature>
<feature type="repeat" description="TPR 2">
    <location>
        <begin position="72"/>
        <end position="105"/>
    </location>
</feature>
<feature type="repeat" description="TPR 3">
    <location>
        <begin position="120"/>
        <end position="153"/>
    </location>
</feature>
<accession>P61844</accession>
<accession>P56787</accession>
<accession>Q9XQP0</accession>
<keyword id="KW-0150">Chloroplast</keyword>
<keyword id="KW-0472">Membrane</keyword>
<keyword id="KW-0602">Photosynthesis</keyword>
<keyword id="KW-0934">Plastid</keyword>
<keyword id="KW-0677">Repeat</keyword>
<keyword id="KW-0793">Thylakoid</keyword>
<keyword id="KW-0802">TPR repeat</keyword>
<protein>
    <recommendedName>
        <fullName evidence="1">Photosystem I assembly protein Ycf3</fullName>
    </recommendedName>
</protein>
<reference key="1">
    <citation type="journal article" date="2000" name="Curr. Genet.">
        <title>Transcripts and sequence elements suggest differential promoter usage within the ycf3-psaAB gene cluster on mustard (Sinapis alba L.) chloroplast DNA.</title>
        <authorList>
            <person name="Summer H."/>
            <person name="Pfannschmidt T."/>
            <person name="Link G."/>
        </authorList>
    </citation>
    <scope>NUCLEOTIDE SEQUENCE [GENOMIC DNA]</scope>
    <source>
        <tissue>Cotyledon</tissue>
    </source>
</reference>
<geneLocation type="chloroplast"/>
<comment type="function">
    <text evidence="1">Essential for the assembly of the photosystem I (PSI) complex. May act as a chaperone-like factor to guide the assembly of the PSI subunits.</text>
</comment>
<comment type="subcellular location">
    <subcellularLocation>
        <location evidence="1">Plastid</location>
        <location evidence="1">Chloroplast thylakoid membrane</location>
        <topology evidence="1">Peripheral membrane protein</topology>
    </subcellularLocation>
</comment>
<comment type="similarity">
    <text evidence="1">Belongs to the Ycf3 family.</text>
</comment>
<organism>
    <name type="scientific">Sinapis alba</name>
    <name type="common">White mustard</name>
    <name type="synonym">Brassica hirta</name>
    <dbReference type="NCBI Taxonomy" id="3728"/>
    <lineage>
        <taxon>Eukaryota</taxon>
        <taxon>Viridiplantae</taxon>
        <taxon>Streptophyta</taxon>
        <taxon>Embryophyta</taxon>
        <taxon>Tracheophyta</taxon>
        <taxon>Spermatophyta</taxon>
        <taxon>Magnoliopsida</taxon>
        <taxon>eudicotyledons</taxon>
        <taxon>Gunneridae</taxon>
        <taxon>Pentapetalae</taxon>
        <taxon>rosids</taxon>
        <taxon>malvids</taxon>
        <taxon>Brassicales</taxon>
        <taxon>Brassicaceae</taxon>
        <taxon>Brassiceae</taxon>
        <taxon>Sinapis</taxon>
    </lineage>
</organism>
<proteinExistence type="inferred from homology"/>
<dbReference type="EMBL" id="AJ242660">
    <property type="protein sequence ID" value="CAB44315.1"/>
    <property type="molecule type" value="Genomic_DNA"/>
</dbReference>
<dbReference type="RefSeq" id="YP_009730668.1">
    <property type="nucleotide sequence ID" value="NC_045948.1"/>
</dbReference>
<dbReference type="SMR" id="P61844"/>
<dbReference type="GeneID" id="43960608"/>
<dbReference type="GO" id="GO:0009535">
    <property type="term" value="C:chloroplast thylakoid membrane"/>
    <property type="evidence" value="ECO:0007669"/>
    <property type="project" value="UniProtKB-SubCell"/>
</dbReference>
<dbReference type="GO" id="GO:0015979">
    <property type="term" value="P:photosynthesis"/>
    <property type="evidence" value="ECO:0007669"/>
    <property type="project" value="UniProtKB-UniRule"/>
</dbReference>
<dbReference type="FunFam" id="1.25.40.10:FF:000004">
    <property type="entry name" value="Photosystem I assembly protein Ycf3"/>
    <property type="match status" value="1"/>
</dbReference>
<dbReference type="Gene3D" id="1.25.40.10">
    <property type="entry name" value="Tetratricopeptide repeat domain"/>
    <property type="match status" value="1"/>
</dbReference>
<dbReference type="HAMAP" id="MF_00439">
    <property type="entry name" value="Ycf3"/>
    <property type="match status" value="1"/>
</dbReference>
<dbReference type="InterPro" id="IPR022818">
    <property type="entry name" value="PSI_Ycf3_assembly"/>
</dbReference>
<dbReference type="InterPro" id="IPR011990">
    <property type="entry name" value="TPR-like_helical_dom_sf"/>
</dbReference>
<dbReference type="InterPro" id="IPR019734">
    <property type="entry name" value="TPR_rpt"/>
</dbReference>
<dbReference type="InterPro" id="IPR051685">
    <property type="entry name" value="Ycf3/AcsC/BcsC/TPR_MFPF"/>
</dbReference>
<dbReference type="NCBIfam" id="NF002725">
    <property type="entry name" value="PRK02603.1"/>
    <property type="match status" value="1"/>
</dbReference>
<dbReference type="PANTHER" id="PTHR44943">
    <property type="entry name" value="CELLULOSE SYNTHASE OPERON PROTEIN C"/>
    <property type="match status" value="1"/>
</dbReference>
<dbReference type="PANTHER" id="PTHR44943:SF8">
    <property type="entry name" value="TPR REPEAT-CONTAINING PROTEIN MJ0263"/>
    <property type="match status" value="1"/>
</dbReference>
<dbReference type="Pfam" id="PF00515">
    <property type="entry name" value="TPR_1"/>
    <property type="match status" value="1"/>
</dbReference>
<dbReference type="SMART" id="SM00028">
    <property type="entry name" value="TPR"/>
    <property type="match status" value="3"/>
</dbReference>
<dbReference type="SUPFAM" id="SSF48452">
    <property type="entry name" value="TPR-like"/>
    <property type="match status" value="1"/>
</dbReference>
<dbReference type="PROSITE" id="PS50005">
    <property type="entry name" value="TPR"/>
    <property type="match status" value="3"/>
</dbReference>
<dbReference type="PROSITE" id="PS50293">
    <property type="entry name" value="TPR_REGION"/>
    <property type="match status" value="1"/>
</dbReference>
<name>YCF3_SINAL</name>